<sequence>MASGKEIKTKIASVQSTQKITKAMEMVATSKMRKTQDRMAASRPYSETIRNVISHVSKASIGYKHPFLMEREVKTVGMLVVSTDRGMCGGLNINLFKAVLNEIKKWKEQGVTVEVGVIGAKGIAFFRSLGFKIRAQHSGIGDNPSVEELLGIANDMFDAYKEDKIDALYLAHNQFINTMSQKPSVAQLVPLPELDTDNLDERQQVWDYLYEPEPKVLLDNLLTRYLESQVYQSVVDNLASEQAARMVAMKAATDNAGNLINDLQLVYNKARQASITNELNEIVAGAAAI</sequence>
<dbReference type="EMBL" id="CP000746">
    <property type="protein sequence ID" value="ABR73705.1"/>
    <property type="molecule type" value="Genomic_DNA"/>
</dbReference>
<dbReference type="RefSeq" id="WP_011978980.1">
    <property type="nucleotide sequence ID" value="NC_009655.1"/>
</dbReference>
<dbReference type="SMR" id="A6VL58"/>
<dbReference type="STRING" id="339671.Asuc_0327"/>
<dbReference type="KEGG" id="asu:Asuc_0327"/>
<dbReference type="eggNOG" id="COG0224">
    <property type="taxonomic scope" value="Bacteria"/>
</dbReference>
<dbReference type="HOGENOM" id="CLU_050669_0_1_6"/>
<dbReference type="OrthoDB" id="9812769at2"/>
<dbReference type="Proteomes" id="UP000001114">
    <property type="component" value="Chromosome"/>
</dbReference>
<dbReference type="GO" id="GO:0005886">
    <property type="term" value="C:plasma membrane"/>
    <property type="evidence" value="ECO:0007669"/>
    <property type="project" value="UniProtKB-SubCell"/>
</dbReference>
<dbReference type="GO" id="GO:0045259">
    <property type="term" value="C:proton-transporting ATP synthase complex"/>
    <property type="evidence" value="ECO:0007669"/>
    <property type="project" value="UniProtKB-KW"/>
</dbReference>
<dbReference type="GO" id="GO:0005524">
    <property type="term" value="F:ATP binding"/>
    <property type="evidence" value="ECO:0007669"/>
    <property type="project" value="UniProtKB-UniRule"/>
</dbReference>
<dbReference type="GO" id="GO:0046933">
    <property type="term" value="F:proton-transporting ATP synthase activity, rotational mechanism"/>
    <property type="evidence" value="ECO:0007669"/>
    <property type="project" value="UniProtKB-UniRule"/>
</dbReference>
<dbReference type="GO" id="GO:0042777">
    <property type="term" value="P:proton motive force-driven plasma membrane ATP synthesis"/>
    <property type="evidence" value="ECO:0007669"/>
    <property type="project" value="UniProtKB-UniRule"/>
</dbReference>
<dbReference type="CDD" id="cd12151">
    <property type="entry name" value="F1-ATPase_gamma"/>
    <property type="match status" value="1"/>
</dbReference>
<dbReference type="FunFam" id="1.10.287.80:FF:000005">
    <property type="entry name" value="ATP synthase gamma chain"/>
    <property type="match status" value="1"/>
</dbReference>
<dbReference type="FunFam" id="3.40.1380.10:FF:000006">
    <property type="entry name" value="ATP synthase gamma chain"/>
    <property type="match status" value="1"/>
</dbReference>
<dbReference type="Gene3D" id="3.40.1380.10">
    <property type="match status" value="1"/>
</dbReference>
<dbReference type="Gene3D" id="1.10.287.80">
    <property type="entry name" value="ATP synthase, gamma subunit, helix hairpin domain"/>
    <property type="match status" value="2"/>
</dbReference>
<dbReference type="HAMAP" id="MF_00815">
    <property type="entry name" value="ATP_synth_gamma_bact"/>
    <property type="match status" value="1"/>
</dbReference>
<dbReference type="InterPro" id="IPR035968">
    <property type="entry name" value="ATP_synth_F1_ATPase_gsu"/>
</dbReference>
<dbReference type="InterPro" id="IPR000131">
    <property type="entry name" value="ATP_synth_F1_gsu"/>
</dbReference>
<dbReference type="InterPro" id="IPR023632">
    <property type="entry name" value="ATP_synth_F1_gsu_CS"/>
</dbReference>
<dbReference type="NCBIfam" id="TIGR01146">
    <property type="entry name" value="ATPsyn_F1gamma"/>
    <property type="match status" value="1"/>
</dbReference>
<dbReference type="NCBIfam" id="NF004144">
    <property type="entry name" value="PRK05621.1-1"/>
    <property type="match status" value="1"/>
</dbReference>
<dbReference type="PANTHER" id="PTHR11693">
    <property type="entry name" value="ATP SYNTHASE GAMMA CHAIN"/>
    <property type="match status" value="1"/>
</dbReference>
<dbReference type="PANTHER" id="PTHR11693:SF22">
    <property type="entry name" value="ATP SYNTHASE SUBUNIT GAMMA, MITOCHONDRIAL"/>
    <property type="match status" value="1"/>
</dbReference>
<dbReference type="Pfam" id="PF00231">
    <property type="entry name" value="ATP-synt"/>
    <property type="match status" value="1"/>
</dbReference>
<dbReference type="PRINTS" id="PR00126">
    <property type="entry name" value="ATPASEGAMMA"/>
</dbReference>
<dbReference type="SUPFAM" id="SSF52943">
    <property type="entry name" value="ATP synthase (F1-ATPase), gamma subunit"/>
    <property type="match status" value="1"/>
</dbReference>
<dbReference type="PROSITE" id="PS00153">
    <property type="entry name" value="ATPASE_GAMMA"/>
    <property type="match status" value="1"/>
</dbReference>
<gene>
    <name evidence="1" type="primary">atpG</name>
    <name type="ordered locus">Asuc_0327</name>
</gene>
<name>ATPG_ACTSZ</name>
<keyword id="KW-0066">ATP synthesis</keyword>
<keyword id="KW-0997">Cell inner membrane</keyword>
<keyword id="KW-1003">Cell membrane</keyword>
<keyword id="KW-0139">CF(1)</keyword>
<keyword id="KW-0375">Hydrogen ion transport</keyword>
<keyword id="KW-0406">Ion transport</keyword>
<keyword id="KW-0472">Membrane</keyword>
<keyword id="KW-1185">Reference proteome</keyword>
<keyword id="KW-0813">Transport</keyword>
<evidence type="ECO:0000255" key="1">
    <source>
        <dbReference type="HAMAP-Rule" id="MF_00815"/>
    </source>
</evidence>
<organism>
    <name type="scientific">Actinobacillus succinogenes (strain ATCC 55618 / DSM 22257 / CCUG 43843 / 130Z)</name>
    <dbReference type="NCBI Taxonomy" id="339671"/>
    <lineage>
        <taxon>Bacteria</taxon>
        <taxon>Pseudomonadati</taxon>
        <taxon>Pseudomonadota</taxon>
        <taxon>Gammaproteobacteria</taxon>
        <taxon>Pasteurellales</taxon>
        <taxon>Pasteurellaceae</taxon>
        <taxon>Actinobacillus</taxon>
    </lineage>
</organism>
<feature type="chain" id="PRO_1000072856" description="ATP synthase gamma chain">
    <location>
        <begin position="1"/>
        <end position="289"/>
    </location>
</feature>
<reference key="1">
    <citation type="journal article" date="2010" name="BMC Genomics">
        <title>A genomic perspective on the potential of Actinobacillus succinogenes for industrial succinate production.</title>
        <authorList>
            <person name="McKinlay J.B."/>
            <person name="Laivenieks M."/>
            <person name="Schindler B.D."/>
            <person name="McKinlay A.A."/>
            <person name="Siddaramappa S."/>
            <person name="Challacombe J.F."/>
            <person name="Lowry S.R."/>
            <person name="Clum A."/>
            <person name="Lapidus A.L."/>
            <person name="Burkhart K.B."/>
            <person name="Harkins V."/>
            <person name="Vieille C."/>
        </authorList>
    </citation>
    <scope>NUCLEOTIDE SEQUENCE [LARGE SCALE GENOMIC DNA]</scope>
    <source>
        <strain>ATCC 55618 / DSM 22257 / CCUG 43843 / 130Z</strain>
    </source>
</reference>
<accession>A6VL58</accession>
<comment type="function">
    <text evidence="1">Produces ATP from ADP in the presence of a proton gradient across the membrane. The gamma chain is believed to be important in regulating ATPase activity and the flow of protons through the CF(0) complex.</text>
</comment>
<comment type="subunit">
    <text evidence="1">F-type ATPases have 2 components, CF(1) - the catalytic core - and CF(0) - the membrane proton channel. CF(1) has five subunits: alpha(3), beta(3), gamma(1), delta(1), epsilon(1). CF(0) has three main subunits: a, b and c.</text>
</comment>
<comment type="subcellular location">
    <subcellularLocation>
        <location evidence="1">Cell inner membrane</location>
        <topology evidence="1">Peripheral membrane protein</topology>
    </subcellularLocation>
</comment>
<comment type="similarity">
    <text evidence="1">Belongs to the ATPase gamma chain family.</text>
</comment>
<proteinExistence type="inferred from homology"/>
<protein>
    <recommendedName>
        <fullName evidence="1">ATP synthase gamma chain</fullName>
    </recommendedName>
    <alternativeName>
        <fullName evidence="1">ATP synthase F1 sector gamma subunit</fullName>
    </alternativeName>
    <alternativeName>
        <fullName evidence="1">F-ATPase gamma subunit</fullName>
    </alternativeName>
</protein>